<sequence>MADSSSSSFFPDFGLLLYLEELNKEELNTFKLFLKETMEPEHGLTPWNEVKKARREDLANLMKKYYPGEKAWSVSLKIFGKMNLKDLCERAKEEINWSAQTIGPDDAKAGETQEDQEAVLGDGTEYRNRIKEKFCITWDKKSLAGKPEDFHHGIAEKDRKLLEHLFDVDVKTGAQPQIVVLQGAAGVGKTTLVRKAMLDWAEGSLYQQRFKYVFYLNGREINQLKERSFAQLISKDWPSTEGPIEEIMYQPSSLLFIIDSFDELNFAFEEPEFALCEDWTQEHPVSFLMSSLLRKVMLPEASLLVTTRLTTSKRLKQLLKNHHYVELLGMSEDAREEYIYQFFEDKRWAMKVFSSLKSNEMLFSMCQVPLVCWAACTCLKQQMEKGGDVTLTCQTTTALFTCYISSLFTPVDGGSPSLPNQAQLRRLCQVAAKGIWTMTYVFYRENLRRLGLTQSDVSSFMDSNIIQKDAEYENCYVFTHLHVQEFFAAMFYMLKGSWEAGNPSCQPFEDLKSLLQSTSYKDPHLTQMKCFLFGLLNEDRVKQLERTFNCKMSLKIKSKLLQCMEVLGNSDYSPSQLGFLELFHCLYETQDKAFISQAMRCFPKVAINICEKIHLLVSSFCLKHCRCLRTIRLSVTVVFEKKILKTSLPTNTWDGDRITHCWQDLCSVLHTNEHLRELDLYHSNLDKSAMNILHHELRHPNCKLQKLLLKFITFPDGCQDISTSLIHNKNLMHLDLKGSDIGDNGVKSLCEALKHPECKLQTLRLESCNLTVFCCLNISNALIRSQSLIFLNLSTNNLLDDGVQLLCEALRHPKCYLERLSLESCGLTEAGCEYLSLALISNKRLTHLCLADNVLGDGGVKLMSDALQHAQCTLKSLVLRRCHFTSLSSEYLSTSLLHNKSLTHLDLGSNWLQDNGVKLLCDVFRHPSCNLQDLELMGCVLTNACCLDLASVILNNPNLRSLDLGNNDLQDDGVKILCDALRYPNCNIQRLGLEYCGLTSLCCQDLSSALICNKRLIKMNLTQNTLGYEGIVKLYKVLKSPKCKLQVLGLCKEAFDEEAQKLLEAVGVSNPHLIIKPDCNYHNEEDVSWWWCF</sequence>
<proteinExistence type="evidence at protein level"/>
<evidence type="ECO:0000250" key="1">
    <source>
        <dbReference type="UniProtKB" id="Q6B966"/>
    </source>
</evidence>
<evidence type="ECO:0000255" key="2">
    <source>
        <dbReference type="PROSITE-ProRule" id="PRU00061"/>
    </source>
</evidence>
<evidence type="ECO:0000255" key="3">
    <source>
        <dbReference type="PROSITE-ProRule" id="PRU00136"/>
    </source>
</evidence>
<evidence type="ECO:0000256" key="4">
    <source>
        <dbReference type="SAM" id="MobiDB-lite"/>
    </source>
</evidence>
<evidence type="ECO:0000269" key="5">
    <source>
    </source>
</evidence>
<evidence type="ECO:0000269" key="6">
    <source>
    </source>
</evidence>
<evidence type="ECO:0000269" key="7">
    <source>
    </source>
</evidence>
<evidence type="ECO:0000269" key="8">
    <source>
    </source>
</evidence>
<evidence type="ECO:0000303" key="9">
    <source>
    </source>
</evidence>
<evidence type="ECO:0000305" key="10"/>
<evidence type="ECO:0007744" key="11">
    <source>
        <dbReference type="PDB" id="4N1J"/>
    </source>
</evidence>
<evidence type="ECO:0007744" key="12">
    <source>
        <dbReference type="PDB" id="4N1K"/>
    </source>
</evidence>
<evidence type="ECO:0007744" key="13">
    <source>
        <dbReference type="PDB" id="4N1L"/>
    </source>
</evidence>
<evidence type="ECO:0007829" key="14">
    <source>
        <dbReference type="PDB" id="4N1L"/>
    </source>
</evidence>
<name>NAL14_HUMAN</name>
<protein>
    <recommendedName>
        <fullName>NACHT, LRR and PYD domains-containing protein 14</fullName>
    </recommendedName>
    <alternativeName>
        <fullName evidence="9">Nucleotide-binding oligomerization domain protein 5</fullName>
    </alternativeName>
</protein>
<dbReference type="EMBL" id="AY154469">
    <property type="protein sequence ID" value="AAO18165.1"/>
    <property type="molecule type" value="mRNA"/>
</dbReference>
<dbReference type="EMBL" id="BK001107">
    <property type="protein sequence ID" value="DAA01240.1"/>
    <property type="molecule type" value="mRNA"/>
</dbReference>
<dbReference type="CCDS" id="CCDS7776.1"/>
<dbReference type="RefSeq" id="NP_789792.1">
    <property type="nucleotide sequence ID" value="NM_176822.4"/>
</dbReference>
<dbReference type="PDB" id="4N1J">
    <property type="method" value="X-ray"/>
    <property type="resolution" value="2.60 A"/>
    <property type="chains" value="A/B/C/D=1-100"/>
</dbReference>
<dbReference type="PDB" id="4N1K">
    <property type="method" value="X-ray"/>
    <property type="resolution" value="3.00 A"/>
    <property type="chains" value="A/B/C/D=1-100"/>
</dbReference>
<dbReference type="PDB" id="4N1L">
    <property type="method" value="X-ray"/>
    <property type="resolution" value="1.99 A"/>
    <property type="chains" value="A=1-100"/>
</dbReference>
<dbReference type="PDBsum" id="4N1J"/>
<dbReference type="PDBsum" id="4N1K"/>
<dbReference type="PDBsum" id="4N1L"/>
<dbReference type="SMR" id="Q86W24"/>
<dbReference type="BioGRID" id="130710">
    <property type="interactions" value="6"/>
</dbReference>
<dbReference type="CORUM" id="Q86W24"/>
<dbReference type="FunCoup" id="Q86W24">
    <property type="interactions" value="451"/>
</dbReference>
<dbReference type="IntAct" id="Q86W24">
    <property type="interactions" value="3"/>
</dbReference>
<dbReference type="MINT" id="Q86W24"/>
<dbReference type="STRING" id="9606.ENSP00000299481"/>
<dbReference type="GlyGen" id="Q86W24">
    <property type="glycosylation" value="1 site, 1 O-linked glycan (1 site)"/>
</dbReference>
<dbReference type="iPTMnet" id="Q86W24"/>
<dbReference type="PhosphoSitePlus" id="Q86W24"/>
<dbReference type="BioMuta" id="NLRP14"/>
<dbReference type="DMDM" id="38372322"/>
<dbReference type="jPOST" id="Q86W24"/>
<dbReference type="MassIVE" id="Q86W24"/>
<dbReference type="PaxDb" id="9606-ENSP00000299481"/>
<dbReference type="PeptideAtlas" id="Q86W24"/>
<dbReference type="ProteomicsDB" id="70103"/>
<dbReference type="Antibodypedia" id="42308">
    <property type="antibodies" value="48 antibodies from 22 providers"/>
</dbReference>
<dbReference type="DNASU" id="338323"/>
<dbReference type="Ensembl" id="ENST00000299481.5">
    <property type="protein sequence ID" value="ENSP00000299481.5"/>
    <property type="gene ID" value="ENSG00000158077.5"/>
</dbReference>
<dbReference type="GeneID" id="338323"/>
<dbReference type="KEGG" id="hsa:338323"/>
<dbReference type="MANE-Select" id="ENST00000299481.5">
    <property type="protein sequence ID" value="ENSP00000299481.5"/>
    <property type="RefSeq nucleotide sequence ID" value="NM_176822.4"/>
    <property type="RefSeq protein sequence ID" value="NP_789792.1"/>
</dbReference>
<dbReference type="UCSC" id="uc001mfb.2">
    <property type="organism name" value="human"/>
</dbReference>
<dbReference type="AGR" id="HGNC:22939"/>
<dbReference type="CTD" id="338323"/>
<dbReference type="GeneCards" id="NLRP14"/>
<dbReference type="HGNC" id="HGNC:22939">
    <property type="gene designation" value="NLRP14"/>
</dbReference>
<dbReference type="HPA" id="ENSG00000158077">
    <property type="expression patterns" value="Not detected"/>
</dbReference>
<dbReference type="MIM" id="609665">
    <property type="type" value="gene"/>
</dbReference>
<dbReference type="neXtProt" id="NX_Q86W24"/>
<dbReference type="OpenTargets" id="ENSG00000158077"/>
<dbReference type="PharmGKB" id="PA162397917"/>
<dbReference type="VEuPathDB" id="HostDB:ENSG00000158077"/>
<dbReference type="eggNOG" id="ENOG502SBIG">
    <property type="taxonomic scope" value="Eukaryota"/>
</dbReference>
<dbReference type="GeneTree" id="ENSGT00940000162005"/>
<dbReference type="HOGENOM" id="CLU_002274_2_1_1"/>
<dbReference type="InParanoid" id="Q86W24"/>
<dbReference type="OMA" id="HLTQMKC"/>
<dbReference type="OrthoDB" id="120976at2759"/>
<dbReference type="PAN-GO" id="Q86W24">
    <property type="GO annotations" value="2 GO annotations based on evolutionary models"/>
</dbReference>
<dbReference type="PhylomeDB" id="Q86W24"/>
<dbReference type="TreeFam" id="TF340267"/>
<dbReference type="PathwayCommons" id="Q86W24"/>
<dbReference type="SignaLink" id="Q86W24"/>
<dbReference type="BioGRID-ORCS" id="338323">
    <property type="hits" value="7 hits in 1147 CRISPR screens"/>
</dbReference>
<dbReference type="ChiTaRS" id="NLRP14">
    <property type="organism name" value="human"/>
</dbReference>
<dbReference type="EvolutionaryTrace" id="Q86W24"/>
<dbReference type="GeneWiki" id="NLRP14"/>
<dbReference type="GenomeRNAi" id="338323"/>
<dbReference type="Pharos" id="Q86W24">
    <property type="development level" value="Tbio"/>
</dbReference>
<dbReference type="PRO" id="PR:Q86W24"/>
<dbReference type="Proteomes" id="UP000005640">
    <property type="component" value="Chromosome 11"/>
</dbReference>
<dbReference type="RNAct" id="Q86W24">
    <property type="molecule type" value="protein"/>
</dbReference>
<dbReference type="Bgee" id="ENSG00000158077">
    <property type="expression patterns" value="Expressed in oocyte and 19 other cell types or tissues"/>
</dbReference>
<dbReference type="GO" id="GO:0005737">
    <property type="term" value="C:cytoplasm"/>
    <property type="evidence" value="ECO:0000318"/>
    <property type="project" value="GO_Central"/>
</dbReference>
<dbReference type="GO" id="GO:0005524">
    <property type="term" value="F:ATP binding"/>
    <property type="evidence" value="ECO:0007669"/>
    <property type="project" value="UniProtKB-KW"/>
</dbReference>
<dbReference type="GO" id="GO:0030154">
    <property type="term" value="P:cell differentiation"/>
    <property type="evidence" value="ECO:0007669"/>
    <property type="project" value="UniProtKB-KW"/>
</dbReference>
<dbReference type="GO" id="GO:0050727">
    <property type="term" value="P:regulation of inflammatory response"/>
    <property type="evidence" value="ECO:0000318"/>
    <property type="project" value="GO_Central"/>
</dbReference>
<dbReference type="GO" id="GO:0007283">
    <property type="term" value="P:spermatogenesis"/>
    <property type="evidence" value="ECO:0000315"/>
    <property type="project" value="UniProtKB"/>
</dbReference>
<dbReference type="CDD" id="cd00116">
    <property type="entry name" value="LRR_RI"/>
    <property type="match status" value="1"/>
</dbReference>
<dbReference type="CDD" id="cd08320">
    <property type="entry name" value="Pyrin_NALPs"/>
    <property type="match status" value="1"/>
</dbReference>
<dbReference type="FunFam" id="1.10.533.10:FF:000056">
    <property type="entry name" value="NACHT, LRR and PYD domains-containing protein 14"/>
    <property type="match status" value="1"/>
</dbReference>
<dbReference type="FunFam" id="3.40.50.300:FF:000442">
    <property type="entry name" value="NACHT, LRR and PYD domains-containing protein 3"/>
    <property type="match status" value="1"/>
</dbReference>
<dbReference type="FunFam" id="3.80.10.10:FF:000584">
    <property type="entry name" value="NACHT, LRR and PYD domains-containing protein 5"/>
    <property type="match status" value="1"/>
</dbReference>
<dbReference type="Gene3D" id="1.10.533.10">
    <property type="entry name" value="Death Domain, Fas"/>
    <property type="match status" value="1"/>
</dbReference>
<dbReference type="Gene3D" id="3.40.50.300">
    <property type="entry name" value="P-loop containing nucleotide triphosphate hydrolases"/>
    <property type="match status" value="1"/>
</dbReference>
<dbReference type="Gene3D" id="3.80.10.10">
    <property type="entry name" value="Ribonuclease Inhibitor"/>
    <property type="match status" value="1"/>
</dbReference>
<dbReference type="InterPro" id="IPR004020">
    <property type="entry name" value="DAPIN"/>
</dbReference>
<dbReference type="InterPro" id="IPR011029">
    <property type="entry name" value="DEATH-like_dom_sf"/>
</dbReference>
<dbReference type="InterPro" id="IPR001611">
    <property type="entry name" value="Leu-rich_rpt"/>
</dbReference>
<dbReference type="InterPro" id="IPR032675">
    <property type="entry name" value="LRR_dom_sf"/>
</dbReference>
<dbReference type="InterPro" id="IPR007111">
    <property type="entry name" value="NACHT_NTPase"/>
</dbReference>
<dbReference type="InterPro" id="IPR041267">
    <property type="entry name" value="NLRP_HD2"/>
</dbReference>
<dbReference type="InterPro" id="IPR050637">
    <property type="entry name" value="NLRP_innate_immun_reg"/>
</dbReference>
<dbReference type="InterPro" id="IPR041075">
    <property type="entry name" value="NOD1/2_WH"/>
</dbReference>
<dbReference type="InterPro" id="IPR027417">
    <property type="entry name" value="P-loop_NTPase"/>
</dbReference>
<dbReference type="PANTHER" id="PTHR45690">
    <property type="entry name" value="NACHT, LRR AND PYD DOMAINS-CONTAINING PROTEIN 12"/>
    <property type="match status" value="1"/>
</dbReference>
<dbReference type="PANTHER" id="PTHR45690:SF15">
    <property type="entry name" value="NACHT, LRR AND PYD DOMAINS-CONTAINING PROTEIN 14"/>
    <property type="match status" value="1"/>
</dbReference>
<dbReference type="Pfam" id="PF13516">
    <property type="entry name" value="LRR_6"/>
    <property type="match status" value="3"/>
</dbReference>
<dbReference type="Pfam" id="PF05729">
    <property type="entry name" value="NACHT"/>
    <property type="match status" value="1"/>
</dbReference>
<dbReference type="Pfam" id="PF17776">
    <property type="entry name" value="NLRC4_HD2"/>
    <property type="match status" value="1"/>
</dbReference>
<dbReference type="Pfam" id="PF17779">
    <property type="entry name" value="NOD2_WH"/>
    <property type="match status" value="1"/>
</dbReference>
<dbReference type="Pfam" id="PF02758">
    <property type="entry name" value="PYRIN"/>
    <property type="match status" value="1"/>
</dbReference>
<dbReference type="SMART" id="SM00368">
    <property type="entry name" value="LRR_RI"/>
    <property type="match status" value="12"/>
</dbReference>
<dbReference type="SMART" id="SM01289">
    <property type="entry name" value="PYRIN"/>
    <property type="match status" value="1"/>
</dbReference>
<dbReference type="SUPFAM" id="SSF47986">
    <property type="entry name" value="DEATH domain"/>
    <property type="match status" value="1"/>
</dbReference>
<dbReference type="SUPFAM" id="SSF52540">
    <property type="entry name" value="P-loop containing nucleoside triphosphate hydrolases"/>
    <property type="match status" value="1"/>
</dbReference>
<dbReference type="SUPFAM" id="SSF52047">
    <property type="entry name" value="RNI-like"/>
    <property type="match status" value="2"/>
</dbReference>
<dbReference type="PROSITE" id="PS50824">
    <property type="entry name" value="DAPIN"/>
    <property type="match status" value="1"/>
</dbReference>
<dbReference type="PROSITE" id="PS50837">
    <property type="entry name" value="NACHT"/>
    <property type="match status" value="1"/>
</dbReference>
<feature type="chain" id="PRO_0000080901" description="NACHT, LRR and PYD domains-containing protein 14">
    <location>
        <begin position="1"/>
        <end position="1093"/>
    </location>
</feature>
<feature type="domain" description="Pyrin" evidence="2">
    <location>
        <begin position="1"/>
        <end position="97"/>
    </location>
</feature>
<feature type="domain" description="NACHT" evidence="3">
    <location>
        <begin position="177"/>
        <end position="499"/>
    </location>
</feature>
<feature type="repeat" description="LRR 1">
    <location>
        <begin position="730"/>
        <end position="750"/>
    </location>
</feature>
<feature type="repeat" description="LRR 2">
    <location>
        <begin position="759"/>
        <end position="780"/>
    </location>
</feature>
<feature type="repeat" description="LRR 3">
    <location>
        <begin position="787"/>
        <end position="807"/>
    </location>
</feature>
<feature type="repeat" description="LRR 4">
    <location>
        <begin position="816"/>
        <end position="836"/>
    </location>
</feature>
<feature type="repeat" description="LRR 5">
    <location>
        <begin position="844"/>
        <end position="864"/>
    </location>
</feature>
<feature type="repeat" description="LRR 6">
    <location>
        <begin position="873"/>
        <end position="894"/>
    </location>
</feature>
<feature type="repeat" description="LRR 7">
    <location>
        <begin position="901"/>
        <end position="921"/>
    </location>
</feature>
<feature type="repeat" description="LRR 8">
    <location>
        <begin position="930"/>
        <end position="951"/>
    </location>
</feature>
<feature type="repeat" description="LRR 9">
    <location>
        <begin position="958"/>
        <end position="978"/>
    </location>
</feature>
<feature type="repeat" description="LRR 10">
    <location>
        <begin position="987"/>
        <end position="1008"/>
    </location>
</feature>
<feature type="repeat" description="LRR 11">
    <location>
        <begin position="1015"/>
        <end position="1035"/>
    </location>
</feature>
<feature type="region of interest" description="Disordered" evidence="4">
    <location>
        <begin position="102"/>
        <end position="121"/>
    </location>
</feature>
<feature type="binding site" evidence="3">
    <location>
        <begin position="183"/>
        <end position="190"/>
    </location>
    <ligand>
        <name>ATP</name>
        <dbReference type="ChEBI" id="CHEBI:30616"/>
    </ligand>
</feature>
<feature type="sequence variant" id="VAR_053622" description="In dbSNP:rs11041150.">
    <original>E</original>
    <variation>K</variation>
    <location>
        <position position="21"/>
    </location>
</feature>
<feature type="sequence variant" id="VAR_031932" description="In dbSNP:rs12801277." evidence="5">
    <original>N</original>
    <variation>T</variation>
    <location>
        <position position="48"/>
    </location>
</feature>
<feature type="sequence variant" id="VAR_031933" description="In dbSNP:rs61063081." evidence="5">
    <original>R</original>
    <variation>Q</variation>
    <location>
        <position position="55"/>
    </location>
</feature>
<feature type="sequence variant" id="VAR_031934" description="Increased tendency to form aggregates; dbSNP:rs199735773." evidence="5 7 8">
    <original>D</original>
    <variation>V</variation>
    <location>
        <position position="86"/>
    </location>
</feature>
<feature type="sequence variant" id="VAR_031935" description="In dbSNP:rs16921697." evidence="5">
    <original>K</original>
    <variation>R</variation>
    <location>
        <position position="92"/>
    </location>
</feature>
<feature type="sequence variant" id="VAR_031936" description="In dbSNP:rs117823353." evidence="5">
    <original>S</original>
    <variation>L</variation>
    <location>
        <position position="98"/>
    </location>
</feature>
<feature type="sequence variant" id="VAR_031937" description="In dbSNP:rs368562565." evidence="5">
    <original>A</original>
    <variation>T</variation>
    <location>
        <position position="375"/>
    </location>
</feature>
<feature type="sequence variant" id="VAR_031938" description="In dbSNP:rs76670455." evidence="5">
    <original>T</original>
    <variation>I</variation>
    <location>
        <position position="397"/>
    </location>
</feature>
<feature type="sequence variant" id="VAR_031939" description="In dbSNP:rs147389856." evidence="5">
    <original>V</original>
    <variation>M</variation>
    <location>
        <position position="441"/>
    </location>
</feature>
<feature type="sequence variant" id="VAR_053623" description="In dbSNP:rs11041151.">
    <original>L</original>
    <variation>F</variation>
    <location>
        <position position="511"/>
    </location>
</feature>
<feature type="sequence variant" id="VAR_031940" description="In dbSNP:rs1044378174." evidence="5">
    <original>D</original>
    <variation>G</variation>
    <location>
        <position position="522"/>
    </location>
</feature>
<feature type="sequence variant" id="VAR_036387" description="In a breast cancer sample; somatic mutation." evidence="6">
    <original>S</original>
    <variation>C</variation>
    <location>
        <position position="779"/>
    </location>
</feature>
<feature type="sequence variant" id="VAR_024180" description="In dbSNP:rs10839708." evidence="5">
    <original>E</original>
    <variation>K</variation>
    <location>
        <position position="808"/>
    </location>
</feature>
<feature type="sequence variant" id="VAR_031941" description="In dbSNP:rs117124176." evidence="5">
    <original>S</original>
    <variation>T</variation>
    <location>
        <position position="951"/>
    </location>
</feature>
<feature type="sequence variant" id="VAR_031942" description="In dbSNP:rs117583918." evidence="5">
    <original>L</original>
    <variation>S</variation>
    <location>
        <position position="954"/>
    </location>
</feature>
<feature type="sequence variant" id="VAR_031943" description="In dbSNP:rs17280682." evidence="5">
    <original>L</original>
    <variation>F</variation>
    <location>
        <position position="1010"/>
    </location>
</feature>
<feature type="sequence variant" id="VAR_031944" description="In dbSNP:rs115776642." evidence="5">
    <original>M</original>
    <variation>I</variation>
    <location>
        <position position="1019"/>
    </location>
</feature>
<feature type="mutagenesis site" description="Increased thermal stability of the Pyrin domain." evidence="7">
    <original>L</original>
    <variation>R</variation>
    <location>
        <position position="84"/>
    </location>
</feature>
<feature type="helix" evidence="14">
    <location>
        <begin position="9"/>
        <end position="12"/>
    </location>
</feature>
<feature type="helix" evidence="14">
    <location>
        <begin position="14"/>
        <end position="19"/>
    </location>
</feature>
<feature type="helix" evidence="14">
    <location>
        <begin position="24"/>
        <end position="38"/>
    </location>
</feature>
<feature type="turn" evidence="14">
    <location>
        <begin position="39"/>
        <end position="41"/>
    </location>
</feature>
<feature type="helix" evidence="14">
    <location>
        <begin position="45"/>
        <end position="52"/>
    </location>
</feature>
<feature type="helix" evidence="14">
    <location>
        <begin position="55"/>
        <end position="65"/>
    </location>
</feature>
<feature type="helix" evidence="14">
    <location>
        <begin position="69"/>
        <end position="81"/>
    </location>
</feature>
<feature type="helix" evidence="14">
    <location>
        <begin position="85"/>
        <end position="100"/>
    </location>
</feature>
<gene>
    <name type="primary">NLRP14</name>
    <name type="synonym">NALP14</name>
    <name evidence="9" type="synonym">NOD5</name>
</gene>
<accession>Q86W24</accession>
<accession>Q7RTR6</accession>
<keyword id="KW-0002">3D-structure</keyword>
<keyword id="KW-0067">ATP-binding</keyword>
<keyword id="KW-0963">Cytoplasm</keyword>
<keyword id="KW-0217">Developmental protein</keyword>
<keyword id="KW-0221">Differentiation</keyword>
<keyword id="KW-0433">Leucine-rich repeat</keyword>
<keyword id="KW-0547">Nucleotide-binding</keyword>
<keyword id="KW-1267">Proteomics identification</keyword>
<keyword id="KW-1185">Reference proteome</keyword>
<keyword id="KW-0677">Repeat</keyword>
<keyword id="KW-0744">Spermatogenesis</keyword>
<comment type="function">
    <text>May be involved in inflammation and spermatogenesis.</text>
</comment>
<comment type="subcellular location">
    <subcellularLocation>
        <location evidence="1">Cytoplasm</location>
    </subcellularLocation>
</comment>
<comment type="tissue specificity">
    <text evidence="5">Testis-specific.</text>
</comment>
<comment type="developmental stage">
    <text evidence="5">In the testis, expressed mainly in A dark spermatogonia, mid and late spermatocytes and spermatids but not in mitotically active A pale and B spermatogonia.</text>
</comment>
<comment type="domain">
    <text evidence="7">Upon heterologous expression, a small proportion of the isolated Pyrin domain forms homodimers and higher oligomers.</text>
</comment>
<comment type="similarity">
    <text evidence="10">Belongs to the NLRP family.</text>
</comment>
<reference key="1">
    <citation type="journal article" date="2003" name="Nat. Rev. Mol. Cell Biol.">
        <title>NALPs: a novel protein family involved in inflammation.</title>
        <authorList>
            <person name="Tschopp J."/>
            <person name="Martinon F."/>
            <person name="Burns K."/>
        </authorList>
    </citation>
    <scope>NUCLEOTIDE SEQUENCE [MRNA]</scope>
</reference>
<reference key="2">
    <citation type="journal article" date="2003" name="Nat. Rev. Immunol.">
        <title>NODs: intracellular proteins involved in inflammation and apoptosis.</title>
        <authorList>
            <person name="Inohara N."/>
            <person name="Nunez G."/>
        </authorList>
    </citation>
    <scope>NUCLEOTIDE SEQUENCE [MRNA]</scope>
</reference>
<reference key="3">
    <citation type="journal article" date="2006" name="Hum. Reprod.">
        <title>Mutations in the testis-specific NALP14 gene in men suffering from spermatogenic failure.</title>
        <authorList>
            <person name="Westerveld G.H."/>
            <person name="Korver C.M."/>
            <person name="van Pelt A.M.M."/>
            <person name="Leschot N.J."/>
            <person name="van der Veen F."/>
            <person name="Repping S."/>
            <person name="Lombardi M.P."/>
        </authorList>
    </citation>
    <scope>TISSUE SPECIFICITY</scope>
    <scope>DEVELOPMENTAL STAGE</scope>
    <scope>VARIANTS THR-48; GLN-55; VAL-86; ARG-92; LEU-98; THR-375; ILE-397; MET-441; GLY-522; LYS-808; THR-951; SER-954; PHE-1010 AND ILE-1019</scope>
</reference>
<reference evidence="11 12 13" key="4">
    <citation type="journal article" date="2014" name="Acta Crystallogr. D">
        <title>Structures of the NLRP14 pyrin domain reveal a conformational switch mechanism regulating its molecular interactions.</title>
        <authorList>
            <person name="Eibl C."/>
            <person name="Hessenberger M."/>
            <person name="Wenger J."/>
            <person name="Brandstetter H."/>
        </authorList>
    </citation>
    <scope>X-RAY CRYSTALLOGRAPHY (1.99 ANGSTROMS) OF 1-100 OF WILD-TYPE AND VARIANT VAL-86</scope>
    <scope>DOMAIN</scope>
    <scope>CHARACTERIZATION OF VARIANT VAL-86</scope>
    <scope>MUTAGENESIS OF LEU-84</scope>
</reference>
<reference key="5">
    <citation type="journal article" date="2006" name="Science">
        <title>The consensus coding sequences of human breast and colorectal cancers.</title>
        <authorList>
            <person name="Sjoeblom T."/>
            <person name="Jones S."/>
            <person name="Wood L.D."/>
            <person name="Parsons D.W."/>
            <person name="Lin J."/>
            <person name="Barber T.D."/>
            <person name="Mandelker D."/>
            <person name="Leary R.J."/>
            <person name="Ptak J."/>
            <person name="Silliman N."/>
            <person name="Szabo S."/>
            <person name="Buckhaults P."/>
            <person name="Farrell C."/>
            <person name="Meeh P."/>
            <person name="Markowitz S.D."/>
            <person name="Willis J."/>
            <person name="Dawson D."/>
            <person name="Willson J.K.V."/>
            <person name="Gazdar A.F."/>
            <person name="Hartigan J."/>
            <person name="Wu L."/>
            <person name="Liu C."/>
            <person name="Parmigiani G."/>
            <person name="Park B.H."/>
            <person name="Bachman K.E."/>
            <person name="Papadopoulos N."/>
            <person name="Vogelstein B."/>
            <person name="Kinzler K.W."/>
            <person name="Velculescu V.E."/>
        </authorList>
    </citation>
    <scope>VARIANT [LARGE SCALE ANALYSIS] CYS-779</scope>
</reference>
<reference key="6">
    <citation type="journal article" date="2016" name="Nature">
        <title>Analysis of protein-coding genetic variation in 60,706 humans.</title>
        <authorList>
            <consortium name="Exome Aggregation Consortium"/>
            <person name="Lek M."/>
            <person name="Karczewski K.J."/>
            <person name="Minikel E.V."/>
            <person name="Samocha K.E."/>
            <person name="Banks E."/>
            <person name="Fennell T."/>
            <person name="O'Donnell-Luria A.H."/>
            <person name="Ware J.S."/>
            <person name="Hill A.J."/>
            <person name="Cummings B.B."/>
            <person name="Tukiainen T."/>
            <person name="Birnbaum D.P."/>
            <person name="Kosmicki J.A."/>
            <person name="Duncan L.E."/>
            <person name="Estrada K."/>
            <person name="Zhao F."/>
            <person name="Zou J."/>
            <person name="Pierce-Hoffman E."/>
            <person name="Berghout J."/>
            <person name="Cooper D.N."/>
            <person name="Deflaux N."/>
            <person name="DePristo M."/>
            <person name="Do R."/>
            <person name="Flannick J."/>
            <person name="Fromer M."/>
            <person name="Gauthier L."/>
            <person name="Goldstein J."/>
            <person name="Gupta N."/>
            <person name="Howrigan D."/>
            <person name="Kiezun A."/>
            <person name="Kurki M.I."/>
            <person name="Moonshine A.L."/>
            <person name="Natarajan P."/>
            <person name="Orozco L."/>
            <person name="Peloso G.M."/>
            <person name="Poplin R."/>
            <person name="Rivas M.A."/>
            <person name="Ruano-Rubio V."/>
            <person name="Rose S.A."/>
            <person name="Ruderfer D.M."/>
            <person name="Shakir K."/>
            <person name="Stenson P.D."/>
            <person name="Stevens C."/>
            <person name="Thomas B.P."/>
            <person name="Tiao G."/>
            <person name="Tusie-Luna M.T."/>
            <person name="Weisburd B."/>
            <person name="Won H.H."/>
            <person name="Yu D."/>
            <person name="Altshuler D.M."/>
            <person name="Ardissino D."/>
            <person name="Boehnke M."/>
            <person name="Danesh J."/>
            <person name="Donnelly S."/>
            <person name="Elosua R."/>
            <person name="Florez J.C."/>
            <person name="Gabriel S.B."/>
            <person name="Getz G."/>
            <person name="Glatt S.J."/>
            <person name="Hultman C.M."/>
            <person name="Kathiresan S."/>
            <person name="Laakso M."/>
            <person name="McCarroll S."/>
            <person name="McCarthy M.I."/>
            <person name="McGovern D."/>
            <person name="McPherson R."/>
            <person name="Neale B.M."/>
            <person name="Palotie A."/>
            <person name="Purcell S.M."/>
            <person name="Saleheen D."/>
            <person name="Scharf J.M."/>
            <person name="Sklar P."/>
            <person name="Sullivan P.F."/>
            <person name="Tuomilehto J."/>
            <person name="Tsuang M.T."/>
            <person name="Watkins H.C."/>
            <person name="Wilson J.G."/>
            <person name="Daly M.J."/>
            <person name="MacArthur D.G."/>
        </authorList>
    </citation>
    <scope>VARIANT VAL-86</scope>
</reference>
<organism>
    <name type="scientific">Homo sapiens</name>
    <name type="common">Human</name>
    <dbReference type="NCBI Taxonomy" id="9606"/>
    <lineage>
        <taxon>Eukaryota</taxon>
        <taxon>Metazoa</taxon>
        <taxon>Chordata</taxon>
        <taxon>Craniata</taxon>
        <taxon>Vertebrata</taxon>
        <taxon>Euteleostomi</taxon>
        <taxon>Mammalia</taxon>
        <taxon>Eutheria</taxon>
        <taxon>Euarchontoglires</taxon>
        <taxon>Primates</taxon>
        <taxon>Haplorrhini</taxon>
        <taxon>Catarrhini</taxon>
        <taxon>Hominidae</taxon>
        <taxon>Homo</taxon>
    </lineage>
</organism>